<reference key="1">
    <citation type="journal article" date="1993" name="J. Bacteriol.">
        <title>The Rhodobacter capsulatus chlorin reductase-encoding locus, bchA, consists of three genes, bchX, bchY, and bchZ.</title>
        <authorList>
            <person name="Burke D.H."/>
            <person name="Alberti M."/>
            <person name="Hearst J.E."/>
        </authorList>
    </citation>
    <scope>NUCLEOTIDE SEQUENCE [GENOMIC DNA]</scope>
    <source>
        <strain>ATCC BAA-309 / NBRC 16581 / SB1003</strain>
    </source>
</reference>
<reference key="2">
    <citation type="journal article" date="2010" name="J. Bacteriol.">
        <title>Complete genome sequence of the photosynthetic purple nonsulfur bacterium Rhodobacter capsulatus SB 1003.</title>
        <authorList>
            <person name="Strnad H."/>
            <person name="Lapidus A."/>
            <person name="Paces J."/>
            <person name="Ulbrich P."/>
            <person name="Vlcek C."/>
            <person name="Paces V."/>
            <person name="Haselkorn R."/>
        </authorList>
    </citation>
    <scope>NUCLEOTIDE SEQUENCE [LARGE SCALE GENOMIC DNA]</scope>
    <source>
        <strain>ATCC BAA-309 / NBRC 16581 / SB1003</strain>
    </source>
</reference>
<reference key="3">
    <citation type="journal article" date="2006" name="J. Biol. Chem.">
        <title>A second nitrogenase-like enzyme for bacteriochlorophyll biosynthesis: reconstitution of chlorophyllide a reductase with purified X-protein (BchX) and YZ-protein (BchY-BchZ) from Rhodobacter capsulatus.</title>
        <authorList>
            <person name="Nomata J."/>
            <person name="Mizoguchi T."/>
            <person name="Tamiaki H."/>
            <person name="Fujita Y."/>
        </authorList>
    </citation>
    <scope>FUNCTION</scope>
    <scope>CATALYTIC ACTIVITY</scope>
    <scope>SUBUNIT</scope>
</reference>
<feature type="chain" id="PRO_0000139548" description="Chlorophyllide reductase 35.5 kDa chain">
    <location>
        <begin position="1"/>
        <end position="333"/>
    </location>
</feature>
<feature type="region of interest" description="Disordered" evidence="3">
    <location>
        <begin position="1"/>
        <end position="22"/>
    </location>
</feature>
<feature type="binding site" evidence="1">
    <location>
        <begin position="45"/>
        <end position="50"/>
    </location>
    <ligand>
        <name>ATP</name>
        <dbReference type="ChEBI" id="CHEBI:30616"/>
    </ligand>
</feature>
<feature type="binding site" evidence="1">
    <location>
        <position position="49"/>
    </location>
    <ligand>
        <name>Mg(2+)</name>
        <dbReference type="ChEBI" id="CHEBI:18420"/>
    </ligand>
</feature>
<feature type="binding site" evidence="1">
    <location>
        <position position="74"/>
    </location>
    <ligand>
        <name>ATP</name>
        <dbReference type="ChEBI" id="CHEBI:30616"/>
    </ligand>
</feature>
<feature type="binding site" evidence="1">
    <location>
        <position position="130"/>
    </location>
    <ligand>
        <name>[4Fe-4S] cluster</name>
        <dbReference type="ChEBI" id="CHEBI:49883"/>
        <note>ligand shared between dimeric partners</note>
    </ligand>
</feature>
<feature type="binding site" evidence="1">
    <location>
        <position position="165"/>
    </location>
    <ligand>
        <name>[4Fe-4S] cluster</name>
        <dbReference type="ChEBI" id="CHEBI:49883"/>
        <note>ligand shared between dimeric partners</note>
    </ligand>
</feature>
<feature type="binding site" evidence="1">
    <location>
        <begin position="219"/>
        <end position="220"/>
    </location>
    <ligand>
        <name>ATP</name>
        <dbReference type="ChEBI" id="CHEBI:30616"/>
    </ligand>
</feature>
<accession>P26177</accession>
<accession>D5AP80</accession>
<evidence type="ECO:0000250" key="1"/>
<evidence type="ECO:0000250" key="2">
    <source>
        <dbReference type="UniProtKB" id="D5ANS3"/>
    </source>
</evidence>
<evidence type="ECO:0000256" key="3">
    <source>
        <dbReference type="SAM" id="MobiDB-lite"/>
    </source>
</evidence>
<evidence type="ECO:0000269" key="4">
    <source>
    </source>
</evidence>
<evidence type="ECO:0000305" key="5"/>
<comment type="function">
    <text evidence="4">Converts chlorophylls (Chl) into bacteriochlorophylls (BChl) by reducing ring B of the tetrapyrrole.</text>
</comment>
<comment type="catalytic activity">
    <reaction evidence="4">
        <text>3-deacetyl-3-vinylbacteriochlorophyllide a + 2 oxidized [2Fe-2S]-[ferredoxin] + ADP + phosphate = chlorophyllide a + 2 reduced [2Fe-2S]-[ferredoxin] + ATP + H2O + H(+)</text>
        <dbReference type="Rhea" id="RHEA:37051"/>
        <dbReference type="Rhea" id="RHEA-COMP:10000"/>
        <dbReference type="Rhea" id="RHEA-COMP:10001"/>
        <dbReference type="ChEBI" id="CHEBI:15377"/>
        <dbReference type="ChEBI" id="CHEBI:15378"/>
        <dbReference type="ChEBI" id="CHEBI:30616"/>
        <dbReference type="ChEBI" id="CHEBI:33737"/>
        <dbReference type="ChEBI" id="CHEBI:33738"/>
        <dbReference type="ChEBI" id="CHEBI:43474"/>
        <dbReference type="ChEBI" id="CHEBI:83348"/>
        <dbReference type="ChEBI" id="CHEBI:83373"/>
        <dbReference type="ChEBI" id="CHEBI:456216"/>
        <dbReference type="EC" id="1.3.7.15"/>
    </reaction>
</comment>
<comment type="catalytic activity">
    <reaction evidence="4">
        <text>bacteriochlorophyllide a + 2 oxidized [2Fe-2S]-[ferredoxin] + ADP + phosphate = 3-acetyl-3-devinylchlorophyllide a + 2 reduced [2Fe-2S]-[ferredoxin] + ATP + H2O + H(+)</text>
        <dbReference type="Rhea" id="RHEA:48944"/>
        <dbReference type="Rhea" id="RHEA-COMP:10000"/>
        <dbReference type="Rhea" id="RHEA-COMP:10001"/>
        <dbReference type="ChEBI" id="CHEBI:15377"/>
        <dbReference type="ChEBI" id="CHEBI:15378"/>
        <dbReference type="ChEBI" id="CHEBI:30616"/>
        <dbReference type="ChEBI" id="CHEBI:33737"/>
        <dbReference type="ChEBI" id="CHEBI:33738"/>
        <dbReference type="ChEBI" id="CHEBI:43474"/>
        <dbReference type="ChEBI" id="CHEBI:90794"/>
        <dbReference type="ChEBI" id="CHEBI:90795"/>
        <dbReference type="ChEBI" id="CHEBI:456216"/>
        <dbReference type="EC" id="1.3.7.15"/>
    </reaction>
</comment>
<comment type="catalytic activity">
    <reaction evidence="4">
        <text>3-deacetyl-3-(1-hydroxyethyl)bacteriochlorophyllide a + 2 oxidized [2Fe-2S]-[ferredoxin] + ADP + phosphate = 3-devinyl-3-(1-hydroxyethyl)chlorophyllide a + 2 reduced [2Fe-2S]-[ferredoxin] + ATP + H2O + H(+)</text>
        <dbReference type="Rhea" id="RHEA:48948"/>
        <dbReference type="Rhea" id="RHEA-COMP:10000"/>
        <dbReference type="Rhea" id="RHEA-COMP:10001"/>
        <dbReference type="ChEBI" id="CHEBI:15377"/>
        <dbReference type="ChEBI" id="CHEBI:15378"/>
        <dbReference type="ChEBI" id="CHEBI:30616"/>
        <dbReference type="ChEBI" id="CHEBI:33737"/>
        <dbReference type="ChEBI" id="CHEBI:33738"/>
        <dbReference type="ChEBI" id="CHEBI:43474"/>
        <dbReference type="ChEBI" id="CHEBI:90791"/>
        <dbReference type="ChEBI" id="CHEBI:90792"/>
        <dbReference type="ChEBI" id="CHEBI:456216"/>
        <dbReference type="EC" id="1.3.7.15"/>
    </reaction>
</comment>
<comment type="cofactor">
    <cofactor evidence="2">
        <name>[4Fe-4S] cluster</name>
        <dbReference type="ChEBI" id="CHEBI:49883"/>
    </cofactor>
    <text evidence="2">Binds 1 [4Fe-4S] cluster per dimer.</text>
</comment>
<comment type="pathway">
    <text>Porphyrin-containing compound metabolism; bacteriochlorophyll biosynthesis.</text>
</comment>
<comment type="subunit">
    <text evidence="2 4">Homodimer (By similarity). Chlorophyllide reductase is composed of three subunits; BchX, BchY and BchZ.</text>
</comment>
<comment type="similarity">
    <text evidence="5">Belongs to the NifH/BchL/ChlL family.</text>
</comment>
<dbReference type="EC" id="1.3.7.15" evidence="4"/>
<dbReference type="EMBL" id="Z11165">
    <property type="protein sequence ID" value="CAA77548.1"/>
    <property type="molecule type" value="Genomic_DNA"/>
</dbReference>
<dbReference type="EMBL" id="CP001312">
    <property type="protein sequence ID" value="ADE84452.1"/>
    <property type="molecule type" value="Genomic_DNA"/>
</dbReference>
<dbReference type="PIR" id="S17823">
    <property type="entry name" value="S17823"/>
</dbReference>
<dbReference type="RefSeq" id="WP_013066431.1">
    <property type="nucleotide sequence ID" value="NC_014034.1"/>
</dbReference>
<dbReference type="SMR" id="P26177"/>
<dbReference type="STRING" id="272942.RCAP_rcc00687"/>
<dbReference type="GeneID" id="31489633"/>
<dbReference type="KEGG" id="rcp:RCAP_rcc00687"/>
<dbReference type="eggNOG" id="COG1348">
    <property type="taxonomic scope" value="Bacteria"/>
</dbReference>
<dbReference type="HOGENOM" id="CLU_059373_1_0_5"/>
<dbReference type="OrthoDB" id="9778641at2"/>
<dbReference type="BioCyc" id="MetaCyc:MONOMER-13253"/>
<dbReference type="UniPathway" id="UPA00669"/>
<dbReference type="Proteomes" id="UP000002361">
    <property type="component" value="Chromosome"/>
</dbReference>
<dbReference type="GO" id="GO:0051539">
    <property type="term" value="F:4 iron, 4 sulfur cluster binding"/>
    <property type="evidence" value="ECO:0007669"/>
    <property type="project" value="UniProtKB-KW"/>
</dbReference>
<dbReference type="GO" id="GO:0005524">
    <property type="term" value="F:ATP binding"/>
    <property type="evidence" value="ECO:0007669"/>
    <property type="project" value="UniProtKB-KW"/>
</dbReference>
<dbReference type="GO" id="GO:0046872">
    <property type="term" value="F:metal ion binding"/>
    <property type="evidence" value="ECO:0007669"/>
    <property type="project" value="UniProtKB-KW"/>
</dbReference>
<dbReference type="GO" id="GO:0016628">
    <property type="term" value="F:oxidoreductase activity, acting on the CH-CH group of donors, NAD or NADP as acceptor"/>
    <property type="evidence" value="ECO:0007669"/>
    <property type="project" value="InterPro"/>
</dbReference>
<dbReference type="GO" id="GO:0030494">
    <property type="term" value="P:bacteriochlorophyll biosynthetic process"/>
    <property type="evidence" value="ECO:0007669"/>
    <property type="project" value="UniProtKB-UniPathway"/>
</dbReference>
<dbReference type="GO" id="GO:0015979">
    <property type="term" value="P:photosynthesis"/>
    <property type="evidence" value="ECO:0007669"/>
    <property type="project" value="UniProtKB-KW"/>
</dbReference>
<dbReference type="Gene3D" id="3.40.50.300">
    <property type="entry name" value="P-loop containing nucleotide triphosphate hydrolases"/>
    <property type="match status" value="1"/>
</dbReference>
<dbReference type="InterPro" id="IPR010246">
    <property type="entry name" value="BchX"/>
</dbReference>
<dbReference type="InterPro" id="IPR030655">
    <property type="entry name" value="NifH/chlL_CS"/>
</dbReference>
<dbReference type="InterPro" id="IPR000392">
    <property type="entry name" value="NifH/frxC"/>
</dbReference>
<dbReference type="InterPro" id="IPR027417">
    <property type="entry name" value="P-loop_NTPase"/>
</dbReference>
<dbReference type="NCBIfam" id="TIGR02016">
    <property type="entry name" value="BchX"/>
    <property type="match status" value="1"/>
</dbReference>
<dbReference type="PANTHER" id="PTHR42864">
    <property type="entry name" value="LIGHT-INDEPENDENT PROTOCHLOROPHYLLIDE REDUCTASE IRON-SULFUR ATP-BINDING PROTEIN"/>
    <property type="match status" value="1"/>
</dbReference>
<dbReference type="PANTHER" id="PTHR42864:SF2">
    <property type="entry name" value="LIGHT-INDEPENDENT PROTOCHLOROPHYLLIDE REDUCTASE IRON-SULFUR ATP-BINDING PROTEIN"/>
    <property type="match status" value="1"/>
</dbReference>
<dbReference type="Pfam" id="PF00142">
    <property type="entry name" value="Fer4_NifH"/>
    <property type="match status" value="1"/>
</dbReference>
<dbReference type="PRINTS" id="PR00091">
    <property type="entry name" value="NITROGNASEII"/>
</dbReference>
<dbReference type="SUPFAM" id="SSF52540">
    <property type="entry name" value="P-loop containing nucleoside triphosphate hydrolases"/>
    <property type="match status" value="1"/>
</dbReference>
<dbReference type="PROSITE" id="PS00746">
    <property type="entry name" value="NIFH_FRXC_1"/>
    <property type="match status" value="1"/>
</dbReference>
<dbReference type="PROSITE" id="PS00692">
    <property type="entry name" value="NIFH_FRXC_2"/>
    <property type="match status" value="1"/>
</dbReference>
<dbReference type="PROSITE" id="PS51026">
    <property type="entry name" value="NIFH_FRXC_3"/>
    <property type="match status" value="1"/>
</dbReference>
<name>BCHX_RHOCB</name>
<organism>
    <name type="scientific">Rhodobacter capsulatus (strain ATCC BAA-309 / NBRC 16581 / SB1003)</name>
    <dbReference type="NCBI Taxonomy" id="272942"/>
    <lineage>
        <taxon>Bacteria</taxon>
        <taxon>Pseudomonadati</taxon>
        <taxon>Pseudomonadota</taxon>
        <taxon>Alphaproteobacteria</taxon>
        <taxon>Rhodobacterales</taxon>
        <taxon>Rhodobacter group</taxon>
        <taxon>Rhodobacter</taxon>
    </lineage>
</organism>
<proteinExistence type="evidence at protein level"/>
<gene>
    <name type="primary">bchX</name>
    <name type="ordered locus">RCAP_rcc00687</name>
</gene>
<sequence length="333" mass="35574">MTDAPNLKGFDARLREEAAEEPTLEIPEQPPTKKTQIIAIYGKGGSGKSFTLANLSHMMAEMGKRVLLIGCDPKSDTTSLLFGGKNCPTIIETATKKKLAGEEVKVGDVCFKSGGVFAMELGGPEVGRGCGGRGIIHGFELLEKLGFHDWDFDFVLLDFLGDVVCGGFGLPIARDMAQKVIVIGSNDLQSLYVANNVCNAVEYFRKLGGNVGVAGIVINKDDGTGEAQAFAREVGIPILAAIPADEELRRKSAAYQIVGSHATPWGKLFEELAGNVADAPPLRPRPLSPDALLALFETDEETRVVDLVPATDEDLRGSNAAPKKSLEVIYDDV</sequence>
<keyword id="KW-0004">4Fe-4S</keyword>
<keyword id="KW-0067">ATP-binding</keyword>
<keyword id="KW-0077">Bacteriochlorophyll biosynthesis</keyword>
<keyword id="KW-0149">Chlorophyll biosynthesis</keyword>
<keyword id="KW-0408">Iron</keyword>
<keyword id="KW-0411">Iron-sulfur</keyword>
<keyword id="KW-0460">Magnesium</keyword>
<keyword id="KW-0479">Metal-binding</keyword>
<keyword id="KW-0547">Nucleotide-binding</keyword>
<keyword id="KW-0560">Oxidoreductase</keyword>
<keyword id="KW-0602">Photosynthesis</keyword>
<keyword id="KW-1185">Reference proteome</keyword>
<protein>
    <recommendedName>
        <fullName>Chlorophyllide reductase 35.5 kDa chain</fullName>
        <ecNumber evidence="4">1.3.7.15</ecNumber>
    </recommendedName>
    <alternativeName>
        <fullName>Chlorin reductase</fullName>
    </alternativeName>
</protein>